<gene>
    <name evidence="1" type="primary">tmk</name>
    <name type="ordered locus">bll4518</name>
</gene>
<protein>
    <recommendedName>
        <fullName evidence="1">Thymidylate kinase</fullName>
        <ecNumber evidence="1">2.7.4.9</ecNumber>
    </recommendedName>
    <alternativeName>
        <fullName evidence="1">dTMP kinase</fullName>
    </alternativeName>
</protein>
<name>KTHY_BRADU</name>
<dbReference type="EC" id="2.7.4.9" evidence="1"/>
<dbReference type="EMBL" id="BA000040">
    <property type="protein sequence ID" value="BAC49783.1"/>
    <property type="molecule type" value="Genomic_DNA"/>
</dbReference>
<dbReference type="RefSeq" id="NP_771158.1">
    <property type="nucleotide sequence ID" value="NC_004463.1"/>
</dbReference>
<dbReference type="RefSeq" id="WP_011087289.1">
    <property type="nucleotide sequence ID" value="NC_004463.1"/>
</dbReference>
<dbReference type="SMR" id="Q89LM5"/>
<dbReference type="FunCoup" id="Q89LM5">
    <property type="interactions" value="639"/>
</dbReference>
<dbReference type="STRING" id="224911.AAV28_19775"/>
<dbReference type="EnsemblBacteria" id="BAC49783">
    <property type="protein sequence ID" value="BAC49783"/>
    <property type="gene ID" value="BAC49783"/>
</dbReference>
<dbReference type="GeneID" id="46491525"/>
<dbReference type="KEGG" id="bja:bll4518"/>
<dbReference type="PATRIC" id="fig|224911.44.peg.4297"/>
<dbReference type="eggNOG" id="COG0125">
    <property type="taxonomic scope" value="Bacteria"/>
</dbReference>
<dbReference type="HOGENOM" id="CLU_049131_0_0_5"/>
<dbReference type="InParanoid" id="Q89LM5"/>
<dbReference type="OrthoDB" id="9774907at2"/>
<dbReference type="PhylomeDB" id="Q89LM5"/>
<dbReference type="Proteomes" id="UP000002526">
    <property type="component" value="Chromosome"/>
</dbReference>
<dbReference type="GO" id="GO:0005737">
    <property type="term" value="C:cytoplasm"/>
    <property type="evidence" value="ECO:0000318"/>
    <property type="project" value="GO_Central"/>
</dbReference>
<dbReference type="GO" id="GO:0005829">
    <property type="term" value="C:cytosol"/>
    <property type="evidence" value="ECO:0000318"/>
    <property type="project" value="GO_Central"/>
</dbReference>
<dbReference type="GO" id="GO:0005524">
    <property type="term" value="F:ATP binding"/>
    <property type="evidence" value="ECO:0007669"/>
    <property type="project" value="UniProtKB-UniRule"/>
</dbReference>
<dbReference type="GO" id="GO:0004798">
    <property type="term" value="F:dTMP kinase activity"/>
    <property type="evidence" value="ECO:0000318"/>
    <property type="project" value="GO_Central"/>
</dbReference>
<dbReference type="GO" id="GO:0006233">
    <property type="term" value="P:dTDP biosynthetic process"/>
    <property type="evidence" value="ECO:0000318"/>
    <property type="project" value="GO_Central"/>
</dbReference>
<dbReference type="GO" id="GO:0006235">
    <property type="term" value="P:dTTP biosynthetic process"/>
    <property type="evidence" value="ECO:0000318"/>
    <property type="project" value="GO_Central"/>
</dbReference>
<dbReference type="GO" id="GO:0006227">
    <property type="term" value="P:dUDP biosynthetic process"/>
    <property type="evidence" value="ECO:0000318"/>
    <property type="project" value="GO_Central"/>
</dbReference>
<dbReference type="CDD" id="cd01672">
    <property type="entry name" value="TMPK"/>
    <property type="match status" value="1"/>
</dbReference>
<dbReference type="FunFam" id="3.40.50.300:FF:000225">
    <property type="entry name" value="Thymidylate kinase"/>
    <property type="match status" value="1"/>
</dbReference>
<dbReference type="Gene3D" id="3.40.50.300">
    <property type="entry name" value="P-loop containing nucleotide triphosphate hydrolases"/>
    <property type="match status" value="1"/>
</dbReference>
<dbReference type="HAMAP" id="MF_00165">
    <property type="entry name" value="Thymidylate_kinase"/>
    <property type="match status" value="1"/>
</dbReference>
<dbReference type="InterPro" id="IPR027417">
    <property type="entry name" value="P-loop_NTPase"/>
</dbReference>
<dbReference type="InterPro" id="IPR039430">
    <property type="entry name" value="Thymidylate_kin-like_dom"/>
</dbReference>
<dbReference type="InterPro" id="IPR018095">
    <property type="entry name" value="Thymidylate_kin_CS"/>
</dbReference>
<dbReference type="InterPro" id="IPR018094">
    <property type="entry name" value="Thymidylate_kinase"/>
</dbReference>
<dbReference type="NCBIfam" id="TIGR00041">
    <property type="entry name" value="DTMP_kinase"/>
    <property type="match status" value="1"/>
</dbReference>
<dbReference type="PANTHER" id="PTHR10344">
    <property type="entry name" value="THYMIDYLATE KINASE"/>
    <property type="match status" value="1"/>
</dbReference>
<dbReference type="PANTHER" id="PTHR10344:SF4">
    <property type="entry name" value="UMP-CMP KINASE 2, MITOCHONDRIAL"/>
    <property type="match status" value="1"/>
</dbReference>
<dbReference type="Pfam" id="PF02223">
    <property type="entry name" value="Thymidylate_kin"/>
    <property type="match status" value="1"/>
</dbReference>
<dbReference type="SUPFAM" id="SSF52540">
    <property type="entry name" value="P-loop containing nucleoside triphosphate hydrolases"/>
    <property type="match status" value="1"/>
</dbReference>
<dbReference type="PROSITE" id="PS01331">
    <property type="entry name" value="THYMIDYLATE_KINASE"/>
    <property type="match status" value="1"/>
</dbReference>
<evidence type="ECO:0000255" key="1">
    <source>
        <dbReference type="HAMAP-Rule" id="MF_00165"/>
    </source>
</evidence>
<evidence type="ECO:0000256" key="2">
    <source>
        <dbReference type="SAM" id="MobiDB-lite"/>
    </source>
</evidence>
<reference key="1">
    <citation type="journal article" date="2002" name="DNA Res.">
        <title>Complete genomic sequence of nitrogen-fixing symbiotic bacterium Bradyrhizobium japonicum USDA110.</title>
        <authorList>
            <person name="Kaneko T."/>
            <person name="Nakamura Y."/>
            <person name="Sato S."/>
            <person name="Minamisawa K."/>
            <person name="Uchiumi T."/>
            <person name="Sasamoto S."/>
            <person name="Watanabe A."/>
            <person name="Idesawa K."/>
            <person name="Iriguchi M."/>
            <person name="Kawashima K."/>
            <person name="Kohara M."/>
            <person name="Matsumoto M."/>
            <person name="Shimpo S."/>
            <person name="Tsuruoka H."/>
            <person name="Wada T."/>
            <person name="Yamada M."/>
            <person name="Tabata S."/>
        </authorList>
    </citation>
    <scope>NUCLEOTIDE SEQUENCE [LARGE SCALE GENOMIC DNA]</scope>
    <source>
        <strain>JCM 10833 / BCRC 13528 / IAM 13628 / NBRC 14792 / USDA 110</strain>
    </source>
</reference>
<accession>Q89LM5</accession>
<proteinExistence type="inferred from homology"/>
<keyword id="KW-0067">ATP-binding</keyword>
<keyword id="KW-0418">Kinase</keyword>
<keyword id="KW-0545">Nucleotide biosynthesis</keyword>
<keyword id="KW-0547">Nucleotide-binding</keyword>
<keyword id="KW-1185">Reference proteome</keyword>
<keyword id="KW-0808">Transferase</keyword>
<organism>
    <name type="scientific">Bradyrhizobium diazoefficiens (strain JCM 10833 / BCRC 13528 / IAM 13628 / NBRC 14792 / USDA 110)</name>
    <dbReference type="NCBI Taxonomy" id="224911"/>
    <lineage>
        <taxon>Bacteria</taxon>
        <taxon>Pseudomonadati</taxon>
        <taxon>Pseudomonadota</taxon>
        <taxon>Alphaproteobacteria</taxon>
        <taxon>Hyphomicrobiales</taxon>
        <taxon>Nitrobacteraceae</taxon>
        <taxon>Bradyrhizobium</taxon>
    </lineage>
</organism>
<comment type="function">
    <text evidence="1">Phosphorylation of dTMP to form dTDP in both de novo and salvage pathways of dTTP synthesis.</text>
</comment>
<comment type="catalytic activity">
    <reaction evidence="1">
        <text>dTMP + ATP = dTDP + ADP</text>
        <dbReference type="Rhea" id="RHEA:13517"/>
        <dbReference type="ChEBI" id="CHEBI:30616"/>
        <dbReference type="ChEBI" id="CHEBI:58369"/>
        <dbReference type="ChEBI" id="CHEBI:63528"/>
        <dbReference type="ChEBI" id="CHEBI:456216"/>
        <dbReference type="EC" id="2.7.4.9"/>
    </reaction>
</comment>
<comment type="similarity">
    <text evidence="1">Belongs to the thymidylate kinase family.</text>
</comment>
<sequence length="228" mass="24540">MSDSAVQRSSGRGRFITFEGGEGTGKSTQIKKLADRLKAARMRTLVTREPGGSPGAEIMRHLVLSGMGKLLGPEAETLLFAAARDDHVHTVIEPALKQGIWVLCDRFADSTRAYQGSLGSVSPGLINAMQRVTIGDLKPDLTIILDLPVEIGLQRAAARRGSGTPDRFEGEQLSFHQGLREAYRKIAADEPARCVLIDANSDPDTVAGRVWSALRDRLLPTPASVVSV</sequence>
<feature type="chain" id="PRO_0000155246" description="Thymidylate kinase">
    <location>
        <begin position="1"/>
        <end position="228"/>
    </location>
</feature>
<feature type="region of interest" description="Disordered" evidence="2">
    <location>
        <begin position="1"/>
        <end position="23"/>
    </location>
</feature>
<feature type="compositionally biased region" description="Polar residues" evidence="2">
    <location>
        <begin position="1"/>
        <end position="10"/>
    </location>
</feature>
<feature type="binding site" evidence="1">
    <location>
        <begin position="20"/>
        <end position="27"/>
    </location>
    <ligand>
        <name>ATP</name>
        <dbReference type="ChEBI" id="CHEBI:30616"/>
    </ligand>
</feature>